<evidence type="ECO:0000255" key="1">
    <source>
        <dbReference type="HAMAP-Rule" id="MF_01416"/>
    </source>
</evidence>
<feature type="chain" id="PRO_0000371009" description="ATP synthase subunit delta">
    <location>
        <begin position="1"/>
        <end position="180"/>
    </location>
</feature>
<dbReference type="EMBL" id="CR954253">
    <property type="protein sequence ID" value="CAI97535.1"/>
    <property type="molecule type" value="Genomic_DNA"/>
</dbReference>
<dbReference type="RefSeq" id="WP_003623494.1">
    <property type="nucleotide sequence ID" value="NZ_JQAV01000001.1"/>
</dbReference>
<dbReference type="SMR" id="Q1GAW8"/>
<dbReference type="STRING" id="390333.Ldb0708"/>
<dbReference type="KEGG" id="ldb:Ldb0708"/>
<dbReference type="PATRIC" id="fig|390333.13.peg.93"/>
<dbReference type="eggNOG" id="COG0712">
    <property type="taxonomic scope" value="Bacteria"/>
</dbReference>
<dbReference type="HOGENOM" id="CLU_085114_4_1_9"/>
<dbReference type="BioCyc" id="LDEL390333:LDB_RS03080-MONOMER"/>
<dbReference type="Proteomes" id="UP000001259">
    <property type="component" value="Chromosome"/>
</dbReference>
<dbReference type="GO" id="GO:0005886">
    <property type="term" value="C:plasma membrane"/>
    <property type="evidence" value="ECO:0007669"/>
    <property type="project" value="UniProtKB-SubCell"/>
</dbReference>
<dbReference type="GO" id="GO:0045259">
    <property type="term" value="C:proton-transporting ATP synthase complex"/>
    <property type="evidence" value="ECO:0007669"/>
    <property type="project" value="UniProtKB-KW"/>
</dbReference>
<dbReference type="GO" id="GO:0046933">
    <property type="term" value="F:proton-transporting ATP synthase activity, rotational mechanism"/>
    <property type="evidence" value="ECO:0007669"/>
    <property type="project" value="UniProtKB-UniRule"/>
</dbReference>
<dbReference type="Gene3D" id="1.10.520.20">
    <property type="entry name" value="N-terminal domain of the delta subunit of the F1F0-ATP synthase"/>
    <property type="match status" value="1"/>
</dbReference>
<dbReference type="HAMAP" id="MF_01416">
    <property type="entry name" value="ATP_synth_delta_bact"/>
    <property type="match status" value="1"/>
</dbReference>
<dbReference type="InterPro" id="IPR026015">
    <property type="entry name" value="ATP_synth_OSCP/delta_N_sf"/>
</dbReference>
<dbReference type="InterPro" id="IPR020781">
    <property type="entry name" value="ATPase_OSCP/d_CS"/>
</dbReference>
<dbReference type="InterPro" id="IPR000711">
    <property type="entry name" value="ATPase_OSCP/dsu"/>
</dbReference>
<dbReference type="NCBIfam" id="TIGR01145">
    <property type="entry name" value="ATP_synt_delta"/>
    <property type="match status" value="1"/>
</dbReference>
<dbReference type="PANTHER" id="PTHR11910">
    <property type="entry name" value="ATP SYNTHASE DELTA CHAIN"/>
    <property type="match status" value="1"/>
</dbReference>
<dbReference type="Pfam" id="PF00213">
    <property type="entry name" value="OSCP"/>
    <property type="match status" value="1"/>
</dbReference>
<dbReference type="PRINTS" id="PR00125">
    <property type="entry name" value="ATPASEDELTA"/>
</dbReference>
<dbReference type="SUPFAM" id="SSF47928">
    <property type="entry name" value="N-terminal domain of the delta subunit of the F1F0-ATP synthase"/>
    <property type="match status" value="1"/>
</dbReference>
<dbReference type="PROSITE" id="PS00389">
    <property type="entry name" value="ATPASE_DELTA"/>
    <property type="match status" value="1"/>
</dbReference>
<keyword id="KW-0066">ATP synthesis</keyword>
<keyword id="KW-1003">Cell membrane</keyword>
<keyword id="KW-0139">CF(1)</keyword>
<keyword id="KW-0375">Hydrogen ion transport</keyword>
<keyword id="KW-0406">Ion transport</keyword>
<keyword id="KW-0472">Membrane</keyword>
<keyword id="KW-1185">Reference proteome</keyword>
<keyword id="KW-0813">Transport</keyword>
<reference key="1">
    <citation type="journal article" date="2006" name="Proc. Natl. Acad. Sci. U.S.A.">
        <title>The complete genome sequence of Lactobacillus bulgaricus reveals extensive and ongoing reductive evolution.</title>
        <authorList>
            <person name="van de Guchte M."/>
            <person name="Penaud S."/>
            <person name="Grimaldi C."/>
            <person name="Barbe V."/>
            <person name="Bryson K."/>
            <person name="Nicolas P."/>
            <person name="Robert C."/>
            <person name="Oztas S."/>
            <person name="Mangenot S."/>
            <person name="Couloux A."/>
            <person name="Loux V."/>
            <person name="Dervyn R."/>
            <person name="Bossy R."/>
            <person name="Bolotin A."/>
            <person name="Batto J.-M."/>
            <person name="Walunas T."/>
            <person name="Gibrat J.-F."/>
            <person name="Bessieres P."/>
            <person name="Weissenbach J."/>
            <person name="Ehrlich S.D."/>
            <person name="Maguin E."/>
        </authorList>
    </citation>
    <scope>NUCLEOTIDE SEQUENCE [LARGE SCALE GENOMIC DNA]</scope>
    <source>
        <strain>ATCC 11842 / DSM 20081 / BCRC 10696 / JCM 1002 / NBRC 13953 / NCIMB 11778 / NCTC 12712 / WDCM 00102 / Lb 14</strain>
    </source>
</reference>
<organism>
    <name type="scientific">Lactobacillus delbrueckii subsp. bulgaricus (strain ATCC 11842 / DSM 20081 / BCRC 10696 / JCM 1002 / NBRC 13953 / NCIMB 11778 / NCTC 12712 / WDCM 00102 / Lb 14)</name>
    <dbReference type="NCBI Taxonomy" id="390333"/>
    <lineage>
        <taxon>Bacteria</taxon>
        <taxon>Bacillati</taxon>
        <taxon>Bacillota</taxon>
        <taxon>Bacilli</taxon>
        <taxon>Lactobacillales</taxon>
        <taxon>Lactobacillaceae</taxon>
        <taxon>Lactobacillus</taxon>
    </lineage>
</organism>
<proteinExistence type="inferred from homology"/>
<name>ATPD_LACDA</name>
<accession>Q1GAW8</accession>
<comment type="function">
    <text evidence="1">F(1)F(0) ATP synthase produces ATP from ADP in the presence of a proton or sodium gradient. F-type ATPases consist of two structural domains, F(1) containing the extramembraneous catalytic core and F(0) containing the membrane proton channel, linked together by a central stalk and a peripheral stalk. During catalysis, ATP synthesis in the catalytic domain of F(1) is coupled via a rotary mechanism of the central stalk subunits to proton translocation.</text>
</comment>
<comment type="function">
    <text evidence="1">This protein is part of the stalk that links CF(0) to CF(1). It either transmits conformational changes from CF(0) to CF(1) or is implicated in proton conduction.</text>
</comment>
<comment type="subunit">
    <text evidence="1">F-type ATPases have 2 components, F(1) - the catalytic core - and F(0) - the membrane proton channel. F(1) has five subunits: alpha(3), beta(3), gamma(1), delta(1), epsilon(1). F(0) has three main subunits: a(1), b(2) and c(10-14). The alpha and beta chains form an alternating ring which encloses part of the gamma chain. F(1) is attached to F(0) by a central stalk formed by the gamma and epsilon chains, while a peripheral stalk is formed by the delta and b chains.</text>
</comment>
<comment type="subcellular location">
    <subcellularLocation>
        <location evidence="1">Cell membrane</location>
        <topology evidence="1">Peripheral membrane protein</topology>
    </subcellularLocation>
</comment>
<comment type="similarity">
    <text evidence="1">Belongs to the ATPase delta chain family.</text>
</comment>
<protein>
    <recommendedName>
        <fullName evidence="1">ATP synthase subunit delta</fullName>
    </recommendedName>
    <alternativeName>
        <fullName evidence="1">ATP synthase F(1) sector subunit delta</fullName>
    </alternativeName>
    <alternativeName>
        <fullName evidence="1">F-type ATPase subunit delta</fullName>
        <shortName evidence="1">F-ATPase subunit delta</shortName>
    </alternativeName>
</protein>
<gene>
    <name evidence="1" type="primary">atpH</name>
    <name type="ordered locus">Ldb0708</name>
</gene>
<sequence>MALSREETARRYGTAIFDFAKDSGKTELMYSELTELKKAVQAEPRFVQVLSNPVLDAKQKKSLLTAVEQGFSAELQEVLNFLLSYDRFDNLVDIIDYYIHLYNAANHIGTGVAKTVLKLDEDQLQRLADSYAKKYGLQALHLENEVDPEIIGGVVLEVEGRVIDGSVKHRLEKIRAMLTK</sequence>